<organism>
    <name type="scientific">Bacteroides thetaiotaomicron (strain ATCC 29148 / DSM 2079 / JCM 5827 / CCUG 10774 / NCTC 10582 / VPI-5482 / E50)</name>
    <dbReference type="NCBI Taxonomy" id="226186"/>
    <lineage>
        <taxon>Bacteria</taxon>
        <taxon>Pseudomonadati</taxon>
        <taxon>Bacteroidota</taxon>
        <taxon>Bacteroidia</taxon>
        <taxon>Bacteroidales</taxon>
        <taxon>Bacteroidaceae</taxon>
        <taxon>Bacteroides</taxon>
    </lineage>
</organism>
<proteinExistence type="inferred from homology"/>
<name>ARLY_BACTN</name>
<gene>
    <name evidence="1" type="primary">argH</name>
    <name type="ordered locus">BT_3733</name>
</gene>
<reference key="1">
    <citation type="journal article" date="2003" name="Science">
        <title>A genomic view of the human-Bacteroides thetaiotaomicron symbiosis.</title>
        <authorList>
            <person name="Xu J."/>
            <person name="Bjursell M.K."/>
            <person name="Himrod J."/>
            <person name="Deng S."/>
            <person name="Carmichael L.K."/>
            <person name="Chiang H.C."/>
            <person name="Hooper L.V."/>
            <person name="Gordon J.I."/>
        </authorList>
    </citation>
    <scope>NUCLEOTIDE SEQUENCE [LARGE SCALE GENOMIC DNA]</scope>
    <source>
        <strain>ATCC 29148 / DSM 2079 / JCM 5827 / CCUG 10774 / NCTC 10582 / VPI-5482 / E50</strain>
    </source>
</reference>
<protein>
    <recommendedName>
        <fullName evidence="1">Argininosuccinate lyase</fullName>
        <shortName evidence="1">ASAL</shortName>
        <ecNumber evidence="1">4.3.2.1</ecNumber>
    </recommendedName>
    <alternativeName>
        <fullName evidence="1">Arginosuccinase</fullName>
    </alternativeName>
</protein>
<sequence>MAQKLWEKSVQVNKDIERFTVGRDREMDLYLAKHDVLGSMAHITMLESIGLLTKEELEQLLAELKTIYASVERGEFIIEEGVEDVHSQVELMLTRRLGDVGKKIHSGRSRNDQVLLDLKLFTRTQIREIAEAVEQLFHVLILQSERYKNVLMPGYTHLQIAMPSSFGLWFGAYAESLVDDMQFLQAAFRMCNRNPLGSAAGYGSSFPLNRTMTTDLLGFDSLNYNVVYAQMGRGKLERNVAFALATIAGTISKLAFDACMFNSQNFGFVKLPDDCTTGSSIMPHKKNPDVFELTRAKCNKLQSLPQQIMMIANNLPSGYFRDLQIIKEVFLPAFQELKDCLQMTTYIMNEIKVNEHILDDDKYLFIFSVEEVNRLAREGMPFRDAYKKVGLDIEAGKFTHDKQVHHTHEGSIGNLCNDEISALMQQVVDGFNFCGMEQAEKALLGR</sequence>
<feature type="chain" id="PRO_1000116309" description="Argininosuccinate lyase">
    <location>
        <begin position="1"/>
        <end position="446"/>
    </location>
</feature>
<keyword id="KW-0028">Amino-acid biosynthesis</keyword>
<keyword id="KW-0055">Arginine biosynthesis</keyword>
<keyword id="KW-0963">Cytoplasm</keyword>
<keyword id="KW-0456">Lyase</keyword>
<keyword id="KW-1185">Reference proteome</keyword>
<dbReference type="EC" id="4.3.2.1" evidence="1"/>
<dbReference type="EMBL" id="AE015928">
    <property type="protein sequence ID" value="AAO78838.1"/>
    <property type="molecule type" value="Genomic_DNA"/>
</dbReference>
<dbReference type="RefSeq" id="NP_812644.1">
    <property type="nucleotide sequence ID" value="NC_004663.1"/>
</dbReference>
<dbReference type="RefSeq" id="WP_008766984.1">
    <property type="nucleotide sequence ID" value="NC_004663.1"/>
</dbReference>
<dbReference type="SMR" id="Q8A1D3"/>
<dbReference type="FunCoup" id="Q8A1D3">
    <property type="interactions" value="480"/>
</dbReference>
<dbReference type="STRING" id="226186.BT_3733"/>
<dbReference type="PaxDb" id="226186-BT_3733"/>
<dbReference type="EnsemblBacteria" id="AAO78838">
    <property type="protein sequence ID" value="AAO78838"/>
    <property type="gene ID" value="BT_3733"/>
</dbReference>
<dbReference type="GeneID" id="60924902"/>
<dbReference type="KEGG" id="bth:BT_3733"/>
<dbReference type="PATRIC" id="fig|226186.12.peg.3794"/>
<dbReference type="eggNOG" id="COG0165">
    <property type="taxonomic scope" value="Bacteria"/>
</dbReference>
<dbReference type="HOGENOM" id="CLU_027272_2_0_10"/>
<dbReference type="InParanoid" id="Q8A1D3"/>
<dbReference type="OrthoDB" id="9769623at2"/>
<dbReference type="UniPathway" id="UPA00068">
    <property type="reaction ID" value="UER00114"/>
</dbReference>
<dbReference type="Proteomes" id="UP000001414">
    <property type="component" value="Chromosome"/>
</dbReference>
<dbReference type="GO" id="GO:0005829">
    <property type="term" value="C:cytosol"/>
    <property type="evidence" value="ECO:0000318"/>
    <property type="project" value="GO_Central"/>
</dbReference>
<dbReference type="GO" id="GO:0004056">
    <property type="term" value="F:argininosuccinate lyase activity"/>
    <property type="evidence" value="ECO:0000318"/>
    <property type="project" value="GO_Central"/>
</dbReference>
<dbReference type="GO" id="GO:0042450">
    <property type="term" value="P:arginine biosynthetic process via ornithine"/>
    <property type="evidence" value="ECO:0000318"/>
    <property type="project" value="GO_Central"/>
</dbReference>
<dbReference type="GO" id="GO:0006526">
    <property type="term" value="P:L-arginine biosynthetic process"/>
    <property type="evidence" value="ECO:0007669"/>
    <property type="project" value="UniProtKB-UniRule"/>
</dbReference>
<dbReference type="CDD" id="cd01359">
    <property type="entry name" value="Argininosuccinate_lyase"/>
    <property type="match status" value="1"/>
</dbReference>
<dbReference type="Gene3D" id="1.10.40.30">
    <property type="entry name" value="Fumarase/aspartase (C-terminal domain)"/>
    <property type="match status" value="1"/>
</dbReference>
<dbReference type="Gene3D" id="1.20.200.10">
    <property type="entry name" value="Fumarase/aspartase (Central domain)"/>
    <property type="match status" value="1"/>
</dbReference>
<dbReference type="Gene3D" id="1.10.275.10">
    <property type="entry name" value="Fumarase/aspartase (N-terminal domain)"/>
    <property type="match status" value="1"/>
</dbReference>
<dbReference type="HAMAP" id="MF_00006">
    <property type="entry name" value="Arg_succ_lyase"/>
    <property type="match status" value="1"/>
</dbReference>
<dbReference type="InterPro" id="IPR009049">
    <property type="entry name" value="Argininosuccinate_lyase"/>
</dbReference>
<dbReference type="InterPro" id="IPR024083">
    <property type="entry name" value="Fumarase/histidase_N"/>
</dbReference>
<dbReference type="InterPro" id="IPR020557">
    <property type="entry name" value="Fumarate_lyase_CS"/>
</dbReference>
<dbReference type="InterPro" id="IPR000362">
    <property type="entry name" value="Fumarate_lyase_fam"/>
</dbReference>
<dbReference type="InterPro" id="IPR022761">
    <property type="entry name" value="Fumarate_lyase_N"/>
</dbReference>
<dbReference type="InterPro" id="IPR008948">
    <property type="entry name" value="L-Aspartase-like"/>
</dbReference>
<dbReference type="NCBIfam" id="TIGR00838">
    <property type="entry name" value="argH"/>
    <property type="match status" value="1"/>
</dbReference>
<dbReference type="PANTHER" id="PTHR43814">
    <property type="entry name" value="ARGININOSUCCINATE LYASE"/>
    <property type="match status" value="1"/>
</dbReference>
<dbReference type="PANTHER" id="PTHR43814:SF1">
    <property type="entry name" value="ARGININOSUCCINATE LYASE"/>
    <property type="match status" value="1"/>
</dbReference>
<dbReference type="Pfam" id="PF00206">
    <property type="entry name" value="Lyase_1"/>
    <property type="match status" value="1"/>
</dbReference>
<dbReference type="PRINTS" id="PR00145">
    <property type="entry name" value="ARGSUCLYASE"/>
</dbReference>
<dbReference type="PRINTS" id="PR00149">
    <property type="entry name" value="FUMRATELYASE"/>
</dbReference>
<dbReference type="SUPFAM" id="SSF48557">
    <property type="entry name" value="L-aspartase-like"/>
    <property type="match status" value="1"/>
</dbReference>
<dbReference type="PROSITE" id="PS00163">
    <property type="entry name" value="FUMARATE_LYASES"/>
    <property type="match status" value="1"/>
</dbReference>
<evidence type="ECO:0000255" key="1">
    <source>
        <dbReference type="HAMAP-Rule" id="MF_00006"/>
    </source>
</evidence>
<comment type="catalytic activity">
    <reaction evidence="1">
        <text>2-(N(omega)-L-arginino)succinate = fumarate + L-arginine</text>
        <dbReference type="Rhea" id="RHEA:24020"/>
        <dbReference type="ChEBI" id="CHEBI:29806"/>
        <dbReference type="ChEBI" id="CHEBI:32682"/>
        <dbReference type="ChEBI" id="CHEBI:57472"/>
        <dbReference type="EC" id="4.3.2.1"/>
    </reaction>
</comment>
<comment type="pathway">
    <text evidence="1">Amino-acid biosynthesis; L-arginine biosynthesis; L-arginine from L-ornithine and carbamoyl phosphate: step 3/3.</text>
</comment>
<comment type="subcellular location">
    <subcellularLocation>
        <location evidence="1">Cytoplasm</location>
    </subcellularLocation>
</comment>
<comment type="similarity">
    <text evidence="1">Belongs to the lyase 1 family. Argininosuccinate lyase subfamily.</text>
</comment>
<accession>Q8A1D3</accession>